<sequence length="208" mass="24146">MSYKLTYFPIRGLAEPIRLLLVDQGIKFTDEHIPKDDFVSIKSQFQFGQLPCFYDGDQQIVQSGAILRHLARKFNLNGENNAETSYVDMFYEGIRDLHSKYTRMIYEAYETQKDPFIKNILPQELAKLEKLLATRDNGKNFILGDKISFADYVLFEELDVQQILDPHCLEKFPLLKAFHQRLGDKPKIKEYCAKRNASKMPVNGNGKQ</sequence>
<dbReference type="EC" id="2.5.1.18"/>
<dbReference type="EMBL" id="U14753">
    <property type="protein sequence ID" value="AAA21585.1"/>
    <property type="molecule type" value="mRNA"/>
</dbReference>
<dbReference type="SMR" id="P46426"/>
<dbReference type="ChEMBL" id="CHEMBL2366475"/>
<dbReference type="GO" id="GO:0005829">
    <property type="term" value="C:cytosol"/>
    <property type="evidence" value="ECO:0007669"/>
    <property type="project" value="TreeGrafter"/>
</dbReference>
<dbReference type="GO" id="GO:0004364">
    <property type="term" value="F:glutathione transferase activity"/>
    <property type="evidence" value="ECO:0007669"/>
    <property type="project" value="UniProtKB-EC"/>
</dbReference>
<dbReference type="GO" id="GO:0006749">
    <property type="term" value="P:glutathione metabolic process"/>
    <property type="evidence" value="ECO:0007669"/>
    <property type="project" value="TreeGrafter"/>
</dbReference>
<dbReference type="CDD" id="cd03076">
    <property type="entry name" value="GST_N_Pi"/>
    <property type="match status" value="1"/>
</dbReference>
<dbReference type="FunFam" id="3.40.30.10:FF:000168">
    <property type="entry name" value="Glutathione S-transferase 2"/>
    <property type="match status" value="1"/>
</dbReference>
<dbReference type="FunFam" id="1.20.1050.10:FF:000020">
    <property type="entry name" value="Glutathione S-transferase P 1"/>
    <property type="match status" value="1"/>
</dbReference>
<dbReference type="Gene3D" id="1.20.1050.10">
    <property type="match status" value="1"/>
</dbReference>
<dbReference type="Gene3D" id="3.40.30.10">
    <property type="entry name" value="Glutaredoxin"/>
    <property type="match status" value="1"/>
</dbReference>
<dbReference type="InterPro" id="IPR010987">
    <property type="entry name" value="Glutathione-S-Trfase_C-like"/>
</dbReference>
<dbReference type="InterPro" id="IPR036282">
    <property type="entry name" value="Glutathione-S-Trfase_C_sf"/>
</dbReference>
<dbReference type="InterPro" id="IPR040079">
    <property type="entry name" value="Glutathione_S-Trfase"/>
</dbReference>
<dbReference type="InterPro" id="IPR004045">
    <property type="entry name" value="Glutathione_S-Trfase_N"/>
</dbReference>
<dbReference type="InterPro" id="IPR004046">
    <property type="entry name" value="GST_C"/>
</dbReference>
<dbReference type="InterPro" id="IPR003082">
    <property type="entry name" value="GST_pi"/>
</dbReference>
<dbReference type="InterPro" id="IPR050213">
    <property type="entry name" value="GST_superfamily"/>
</dbReference>
<dbReference type="InterPro" id="IPR036249">
    <property type="entry name" value="Thioredoxin-like_sf"/>
</dbReference>
<dbReference type="PANTHER" id="PTHR11571">
    <property type="entry name" value="GLUTATHIONE S-TRANSFERASE"/>
    <property type="match status" value="1"/>
</dbReference>
<dbReference type="PANTHER" id="PTHR11571:SF141">
    <property type="entry name" value="GLUTATHIONE S-TRANSFERASE"/>
    <property type="match status" value="1"/>
</dbReference>
<dbReference type="Pfam" id="PF14497">
    <property type="entry name" value="GST_C_3"/>
    <property type="match status" value="1"/>
</dbReference>
<dbReference type="Pfam" id="PF02798">
    <property type="entry name" value="GST_N"/>
    <property type="match status" value="1"/>
</dbReference>
<dbReference type="PRINTS" id="PR01268">
    <property type="entry name" value="GSTRNSFRASEP"/>
</dbReference>
<dbReference type="SFLD" id="SFLDG01205">
    <property type="entry name" value="AMPS.1"/>
    <property type="match status" value="1"/>
</dbReference>
<dbReference type="SFLD" id="SFLDS00019">
    <property type="entry name" value="Glutathione_Transferase_(cytos"/>
    <property type="match status" value="1"/>
</dbReference>
<dbReference type="SUPFAM" id="SSF47616">
    <property type="entry name" value="GST C-terminal domain-like"/>
    <property type="match status" value="1"/>
</dbReference>
<dbReference type="SUPFAM" id="SSF52833">
    <property type="entry name" value="Thioredoxin-like"/>
    <property type="match status" value="1"/>
</dbReference>
<dbReference type="PROSITE" id="PS50405">
    <property type="entry name" value="GST_CTER"/>
    <property type="match status" value="1"/>
</dbReference>
<dbReference type="PROSITE" id="PS50404">
    <property type="entry name" value="GST_NTER"/>
    <property type="match status" value="1"/>
</dbReference>
<organism>
    <name type="scientific">Dirofilaria immitis</name>
    <name type="common">Canine heartworm</name>
    <dbReference type="NCBI Taxonomy" id="6287"/>
    <lineage>
        <taxon>Eukaryota</taxon>
        <taxon>Metazoa</taxon>
        <taxon>Ecdysozoa</taxon>
        <taxon>Nematoda</taxon>
        <taxon>Chromadorea</taxon>
        <taxon>Rhabditida</taxon>
        <taxon>Spirurina</taxon>
        <taxon>Spiruromorpha</taxon>
        <taxon>Filarioidea</taxon>
        <taxon>Onchocercidae</taxon>
        <taxon>Dirofilaria</taxon>
    </lineage>
</organism>
<protein>
    <recommendedName>
        <fullName>Glutathione S-transferase</fullName>
        <ecNumber>2.5.1.18</ecNumber>
    </recommendedName>
    <alternativeName>
        <fullName>GST class-pi</fullName>
    </alternativeName>
</protein>
<keyword id="KW-0808">Transferase</keyword>
<evidence type="ECO:0000250" key="1"/>
<evidence type="ECO:0000250" key="2">
    <source>
        <dbReference type="UniProtKB" id="P09211"/>
    </source>
</evidence>
<evidence type="ECO:0000305" key="3"/>
<name>GSTP_DIRIM</name>
<reference key="1">
    <citation type="submission" date="1994-09" db="EMBL/GenBank/DDBJ databases">
        <authorList>
            <person name="James E.R."/>
            <person name="McLean D.C."/>
            <person name="Venkatakrishnaiah L."/>
        </authorList>
    </citation>
    <scope>NUCLEOTIDE SEQUENCE [MRNA]</scope>
</reference>
<feature type="chain" id="PRO_0000185913" description="Glutathione S-transferase">
    <location>
        <begin position="1"/>
        <end position="208"/>
    </location>
</feature>
<feature type="domain" description="GST N-terminal">
    <location>
        <begin position="1"/>
        <end position="78"/>
    </location>
</feature>
<feature type="domain" description="GST C-terminal">
    <location>
        <begin position="80"/>
        <end position="200"/>
    </location>
</feature>
<feature type="binding site" evidence="2">
    <location>
        <position position="7"/>
    </location>
    <ligand>
        <name>glutathione</name>
        <dbReference type="ChEBI" id="CHEBI:57925"/>
    </ligand>
</feature>
<feature type="binding site" evidence="2">
    <location>
        <position position="42"/>
    </location>
    <ligand>
        <name>glutathione</name>
        <dbReference type="ChEBI" id="CHEBI:57925"/>
    </ligand>
</feature>
<feature type="binding site" evidence="2">
    <location>
        <begin position="49"/>
        <end position="50"/>
    </location>
    <ligand>
        <name>glutathione</name>
        <dbReference type="ChEBI" id="CHEBI:57925"/>
    </ligand>
</feature>
<feature type="binding site" evidence="2">
    <location>
        <begin position="62"/>
        <end position="63"/>
    </location>
    <ligand>
        <name>glutathione</name>
        <dbReference type="ChEBI" id="CHEBI:57925"/>
    </ligand>
</feature>
<accession>P46426</accession>
<proteinExistence type="evidence at transcript level"/>
<comment type="function">
    <text>Conjugation of reduced glutathione to a wide number of exogenous and endogenous hydrophobic electrophiles.</text>
</comment>
<comment type="catalytic activity">
    <reaction>
        <text>RX + glutathione = an S-substituted glutathione + a halide anion + H(+)</text>
        <dbReference type="Rhea" id="RHEA:16437"/>
        <dbReference type="ChEBI" id="CHEBI:15378"/>
        <dbReference type="ChEBI" id="CHEBI:16042"/>
        <dbReference type="ChEBI" id="CHEBI:17792"/>
        <dbReference type="ChEBI" id="CHEBI:57925"/>
        <dbReference type="ChEBI" id="CHEBI:90779"/>
        <dbReference type="EC" id="2.5.1.18"/>
    </reaction>
</comment>
<comment type="subunit">
    <text evidence="1">Homodimer.</text>
</comment>
<comment type="similarity">
    <text evidence="3">Belongs to the GST superfamily. Pi family.</text>
</comment>